<feature type="chain" id="PRO_1000136846" description="tRNA pseudouridine synthase D">
    <location>
        <begin position="1"/>
        <end position="352"/>
    </location>
</feature>
<feature type="domain" description="TRUD" evidence="1">
    <location>
        <begin position="157"/>
        <end position="303"/>
    </location>
</feature>
<feature type="active site" description="Nucleophile" evidence="1">
    <location>
        <position position="81"/>
    </location>
</feature>
<gene>
    <name evidence="1" type="primary">truD</name>
    <name type="ordered locus">PputW619_4056</name>
</gene>
<accession>B1JB31</accession>
<protein>
    <recommendedName>
        <fullName evidence="1">tRNA pseudouridine synthase D</fullName>
        <ecNumber evidence="1">5.4.99.27</ecNumber>
    </recommendedName>
    <alternativeName>
        <fullName evidence="1">tRNA pseudouridine(13) synthase</fullName>
    </alternativeName>
    <alternativeName>
        <fullName evidence="1">tRNA pseudouridylate synthase D</fullName>
    </alternativeName>
    <alternativeName>
        <fullName evidence="1">tRNA-uridine isomerase D</fullName>
    </alternativeName>
</protein>
<name>TRUD_PSEPW</name>
<dbReference type="EC" id="5.4.99.27" evidence="1"/>
<dbReference type="EMBL" id="CP000949">
    <property type="protein sequence ID" value="ACA74536.1"/>
    <property type="molecule type" value="Genomic_DNA"/>
</dbReference>
<dbReference type="SMR" id="B1JB31"/>
<dbReference type="STRING" id="390235.PputW619_4056"/>
<dbReference type="KEGG" id="ppw:PputW619_4056"/>
<dbReference type="eggNOG" id="COG0585">
    <property type="taxonomic scope" value="Bacteria"/>
</dbReference>
<dbReference type="HOGENOM" id="CLU_005281_4_0_6"/>
<dbReference type="OrthoDB" id="1550679at2"/>
<dbReference type="GO" id="GO:0005829">
    <property type="term" value="C:cytosol"/>
    <property type="evidence" value="ECO:0007669"/>
    <property type="project" value="TreeGrafter"/>
</dbReference>
<dbReference type="GO" id="GO:0003723">
    <property type="term" value="F:RNA binding"/>
    <property type="evidence" value="ECO:0007669"/>
    <property type="project" value="InterPro"/>
</dbReference>
<dbReference type="GO" id="GO:0160150">
    <property type="term" value="F:tRNA pseudouridine(13) synthase activity"/>
    <property type="evidence" value="ECO:0007669"/>
    <property type="project" value="UniProtKB-EC"/>
</dbReference>
<dbReference type="GO" id="GO:0031119">
    <property type="term" value="P:tRNA pseudouridine synthesis"/>
    <property type="evidence" value="ECO:0007669"/>
    <property type="project" value="UniProtKB-UniRule"/>
</dbReference>
<dbReference type="Gene3D" id="3.30.2350.20">
    <property type="entry name" value="TruD, catalytic domain"/>
    <property type="match status" value="1"/>
</dbReference>
<dbReference type="Gene3D" id="3.30.2340.10">
    <property type="entry name" value="TruD, insertion domain"/>
    <property type="match status" value="1"/>
</dbReference>
<dbReference type="HAMAP" id="MF_01082">
    <property type="entry name" value="TruD"/>
    <property type="match status" value="1"/>
</dbReference>
<dbReference type="InterPro" id="IPR020103">
    <property type="entry name" value="PsdUridine_synth_cat_dom_sf"/>
</dbReference>
<dbReference type="InterPro" id="IPR001656">
    <property type="entry name" value="PsdUridine_synth_TruD"/>
</dbReference>
<dbReference type="InterPro" id="IPR020119">
    <property type="entry name" value="PsdUridine_synth_TruD_CS"/>
</dbReference>
<dbReference type="InterPro" id="IPR011760">
    <property type="entry name" value="PsdUridine_synth_TruD_insert"/>
</dbReference>
<dbReference type="InterPro" id="IPR042214">
    <property type="entry name" value="TruD_catalytic"/>
</dbReference>
<dbReference type="InterPro" id="IPR043165">
    <property type="entry name" value="TruD_insert_sf"/>
</dbReference>
<dbReference type="InterPro" id="IPR050170">
    <property type="entry name" value="TruD_pseudoU_synthase"/>
</dbReference>
<dbReference type="NCBIfam" id="NF002153">
    <property type="entry name" value="PRK00984.1-2"/>
    <property type="match status" value="1"/>
</dbReference>
<dbReference type="PANTHER" id="PTHR47811">
    <property type="entry name" value="TRNA PSEUDOURIDINE SYNTHASE D"/>
    <property type="match status" value="1"/>
</dbReference>
<dbReference type="PANTHER" id="PTHR47811:SF1">
    <property type="entry name" value="TRNA PSEUDOURIDINE SYNTHASE D"/>
    <property type="match status" value="1"/>
</dbReference>
<dbReference type="Pfam" id="PF01142">
    <property type="entry name" value="TruD"/>
    <property type="match status" value="2"/>
</dbReference>
<dbReference type="SUPFAM" id="SSF55120">
    <property type="entry name" value="Pseudouridine synthase"/>
    <property type="match status" value="1"/>
</dbReference>
<dbReference type="PROSITE" id="PS50984">
    <property type="entry name" value="TRUD"/>
    <property type="match status" value="1"/>
</dbReference>
<dbReference type="PROSITE" id="PS01268">
    <property type="entry name" value="UPF0024"/>
    <property type="match status" value="1"/>
</dbReference>
<evidence type="ECO:0000255" key="1">
    <source>
        <dbReference type="HAMAP-Rule" id="MF_01082"/>
    </source>
</evidence>
<comment type="function">
    <text evidence="1">Responsible for synthesis of pseudouridine from uracil-13 in transfer RNAs.</text>
</comment>
<comment type="catalytic activity">
    <reaction evidence="1">
        <text>uridine(13) in tRNA = pseudouridine(13) in tRNA</text>
        <dbReference type="Rhea" id="RHEA:42540"/>
        <dbReference type="Rhea" id="RHEA-COMP:10105"/>
        <dbReference type="Rhea" id="RHEA-COMP:10106"/>
        <dbReference type="ChEBI" id="CHEBI:65314"/>
        <dbReference type="ChEBI" id="CHEBI:65315"/>
        <dbReference type="EC" id="5.4.99.27"/>
    </reaction>
</comment>
<comment type="similarity">
    <text evidence="1">Belongs to the pseudouridine synthase TruD family.</text>
</comment>
<organism>
    <name type="scientific">Pseudomonas putida (strain W619)</name>
    <dbReference type="NCBI Taxonomy" id="390235"/>
    <lineage>
        <taxon>Bacteria</taxon>
        <taxon>Pseudomonadati</taxon>
        <taxon>Pseudomonadota</taxon>
        <taxon>Gammaproteobacteria</taxon>
        <taxon>Pseudomonadales</taxon>
        <taxon>Pseudomonadaceae</taxon>
        <taxon>Pseudomonas</taxon>
    </lineage>
</organism>
<keyword id="KW-0413">Isomerase</keyword>
<keyword id="KW-0819">tRNA processing</keyword>
<sequence length="352" mass="38510">MTELELLGPRASGQPLGTAILKAVAEDFQVDEVLDIPLSGQGEHLWLWVEKRDLNTEEAARRLARAAGVPVRSISYAGLKDRQALTRQWFSLHLPGKADPDLSRAEDATLRVLKQVRHQRKLQRGAHSANGFTLRLTALAADHAALDARLQTLKQQGVPNYFGGQRFGHGGGNVQDAQHWAARKALPEQRNVRSRLLSAARSYLFNQVLAARVADGSWQRAQVGDLLAFTDSRSFFSAGEQECSDPRLAILDLHPTGPMWGEGPSPAAGAALTLETAIGQQHALLCQWLANAGMSHERRILRLPIGGLTWHYPEPDILQLEFVLPAGCFATVVVRELVDLVPAGQTDSPCVF</sequence>
<proteinExistence type="inferred from homology"/>
<reference key="1">
    <citation type="submission" date="2008-02" db="EMBL/GenBank/DDBJ databases">
        <title>Complete sequence of Pseudomonas putida W619.</title>
        <authorList>
            <person name="Copeland A."/>
            <person name="Lucas S."/>
            <person name="Lapidus A."/>
            <person name="Barry K."/>
            <person name="Detter J.C."/>
            <person name="Glavina del Rio T."/>
            <person name="Dalin E."/>
            <person name="Tice H."/>
            <person name="Pitluck S."/>
            <person name="Chain P."/>
            <person name="Malfatti S."/>
            <person name="Shin M."/>
            <person name="Vergez L."/>
            <person name="Schmutz J."/>
            <person name="Larimer F."/>
            <person name="Land M."/>
            <person name="Hauser L."/>
            <person name="Kyrpides N."/>
            <person name="Kim E."/>
            <person name="Taghavi S."/>
            <person name="Vangronsveld D."/>
            <person name="van der Lelie D."/>
            <person name="Richardson P."/>
        </authorList>
    </citation>
    <scope>NUCLEOTIDE SEQUENCE [LARGE SCALE GENOMIC DNA]</scope>
    <source>
        <strain>W619</strain>
    </source>
</reference>